<evidence type="ECO:0000255" key="1"/>
<evidence type="ECO:0000256" key="2">
    <source>
        <dbReference type="SAM" id="MobiDB-lite"/>
    </source>
</evidence>
<evidence type="ECO:0000269" key="3">
    <source>
    </source>
</evidence>
<evidence type="ECO:0000305" key="4"/>
<dbReference type="EC" id="2.4.1.-"/>
<dbReference type="EMBL" id="X89263">
    <property type="protein sequence ID" value="CAA61538.1"/>
    <property type="molecule type" value="Genomic_DNA"/>
</dbReference>
<dbReference type="EMBL" id="CP017625">
    <property type="protein sequence ID" value="AOW28224.1"/>
    <property type="molecule type" value="Genomic_DNA"/>
</dbReference>
<dbReference type="PIR" id="S57713">
    <property type="entry name" value="S57713"/>
</dbReference>
<dbReference type="RefSeq" id="XP_721740.2">
    <property type="nucleotide sequence ID" value="XM_716647.2"/>
</dbReference>
<dbReference type="SMR" id="P46592"/>
<dbReference type="FunCoup" id="P46592">
    <property type="interactions" value="125"/>
</dbReference>
<dbReference type="STRING" id="237561.P46592"/>
<dbReference type="CAZy" id="GT15">
    <property type="family name" value="Glycosyltransferase Family 15"/>
</dbReference>
<dbReference type="EnsemblFungi" id="C3_01830C_A-T">
    <property type="protein sequence ID" value="C3_01830C_A-T-p1"/>
    <property type="gene ID" value="C3_01830C_A"/>
</dbReference>
<dbReference type="GeneID" id="3636583"/>
<dbReference type="KEGG" id="cal:CAALFM_C301830CA"/>
<dbReference type="CGD" id="CAL0000188888">
    <property type="gene designation" value="MNT2"/>
</dbReference>
<dbReference type="VEuPathDB" id="FungiDB:C3_01830C_A"/>
<dbReference type="eggNOG" id="KOG4472">
    <property type="taxonomic scope" value="Eukaryota"/>
</dbReference>
<dbReference type="HOGENOM" id="CLU_024327_1_0_1"/>
<dbReference type="InParanoid" id="P46592"/>
<dbReference type="OrthoDB" id="439943at2759"/>
<dbReference type="PHI-base" id="PHI:392"/>
<dbReference type="PRO" id="PR:P46592"/>
<dbReference type="Proteomes" id="UP000000559">
    <property type="component" value="Chromosome 3"/>
</dbReference>
<dbReference type="GO" id="GO:0005794">
    <property type="term" value="C:Golgi apparatus"/>
    <property type="evidence" value="ECO:0000318"/>
    <property type="project" value="GO_Central"/>
</dbReference>
<dbReference type="GO" id="GO:0000139">
    <property type="term" value="C:Golgi membrane"/>
    <property type="evidence" value="ECO:0007669"/>
    <property type="project" value="UniProtKB-SubCell"/>
</dbReference>
<dbReference type="GO" id="GO:0000026">
    <property type="term" value="F:alpha-1,2-mannosyltransferase activity"/>
    <property type="evidence" value="ECO:0000314"/>
    <property type="project" value="CGD"/>
</dbReference>
<dbReference type="GO" id="GO:0043710">
    <property type="term" value="P:cell adhesion involved in multi-species biofilm formation"/>
    <property type="evidence" value="ECO:0000315"/>
    <property type="project" value="CGD"/>
</dbReference>
<dbReference type="GO" id="GO:0000032">
    <property type="term" value="P:cell wall mannoprotein biosynthetic process"/>
    <property type="evidence" value="ECO:0000318"/>
    <property type="project" value="GO_Central"/>
</dbReference>
<dbReference type="GO" id="GO:0098609">
    <property type="term" value="P:cell-cell adhesion"/>
    <property type="evidence" value="ECO:0000315"/>
    <property type="project" value="CGD"/>
</dbReference>
<dbReference type="GO" id="GO:0007160">
    <property type="term" value="P:cell-matrix adhesion"/>
    <property type="evidence" value="ECO:0000315"/>
    <property type="project" value="CGD"/>
</dbReference>
<dbReference type="GO" id="GO:0006057">
    <property type="term" value="P:mannoprotein biosynthetic process"/>
    <property type="evidence" value="ECO:0000315"/>
    <property type="project" value="CGD"/>
</dbReference>
<dbReference type="GO" id="GO:0006487">
    <property type="term" value="P:protein N-linked glycosylation"/>
    <property type="evidence" value="ECO:0000318"/>
    <property type="project" value="GO_Central"/>
</dbReference>
<dbReference type="GO" id="GO:0006493">
    <property type="term" value="P:protein O-linked glycosylation"/>
    <property type="evidence" value="ECO:0000318"/>
    <property type="project" value="GO_Central"/>
</dbReference>
<dbReference type="GO" id="GO:0030682">
    <property type="term" value="P:symbiont-mediated perturbation of host defenses"/>
    <property type="evidence" value="ECO:0000315"/>
    <property type="project" value="CGD"/>
</dbReference>
<dbReference type="FunFam" id="3.90.550.10:FF:000051">
    <property type="entry name" value="Alpha-1,2-mannosyltransferase (Ktr4)"/>
    <property type="match status" value="1"/>
</dbReference>
<dbReference type="Gene3D" id="3.90.550.10">
    <property type="entry name" value="Spore Coat Polysaccharide Biosynthesis Protein SpsA, Chain A"/>
    <property type="match status" value="1"/>
</dbReference>
<dbReference type="InterPro" id="IPR002685">
    <property type="entry name" value="Glyco_trans_15"/>
</dbReference>
<dbReference type="InterPro" id="IPR029044">
    <property type="entry name" value="Nucleotide-diphossugar_trans"/>
</dbReference>
<dbReference type="PANTHER" id="PTHR31121">
    <property type="entry name" value="ALPHA-1,2 MANNOSYLTRANSFERASE KTR1"/>
    <property type="match status" value="1"/>
</dbReference>
<dbReference type="PANTHER" id="PTHR31121:SF6">
    <property type="entry name" value="ALPHA-1,2 MANNOSYLTRANSFERASE KTR1"/>
    <property type="match status" value="1"/>
</dbReference>
<dbReference type="Pfam" id="PF01793">
    <property type="entry name" value="Glyco_transf_15"/>
    <property type="match status" value="1"/>
</dbReference>
<dbReference type="PIRSF" id="PIRSF018153">
    <property type="entry name" value="Glyco_trans_15"/>
    <property type="match status" value="1"/>
</dbReference>
<dbReference type="SUPFAM" id="SSF53448">
    <property type="entry name" value="Nucleotide-diphospho-sugar transferases"/>
    <property type="match status" value="1"/>
</dbReference>
<comment type="function">
    <text evidence="3">Involved in O-glycosylation of cell wall and secreted proteins. Transfers an alpha-D-mannosyl residue from GDP-mannose into lipid-linked oligosaccharide, forming an alpha-(1-&gt;2)-D-mannosyl-D-mannose linkage. Mainly responsible for the addition of the third mannose residue in an O-linked mannose pentamer. Can also substitute for MNT1 by adding the second mannose residue. Important for adherence to host surfaces and for virulence.</text>
</comment>
<comment type="subcellular location">
    <subcellularLocation>
        <location evidence="4">Golgi apparatus membrane</location>
        <topology evidence="4">Single-pass type II membrane protein</topology>
    </subcellularLocation>
</comment>
<comment type="similarity">
    <text evidence="4">Belongs to the glycosyltransferase 15 family.</text>
</comment>
<proteinExistence type="inferred from homology"/>
<feature type="chain" id="PRO_0000208251" description="Glycolipid 2-alpha-mannosyltransferase 2">
    <location>
        <begin position="1"/>
        <end position="461"/>
    </location>
</feature>
<feature type="topological domain" description="Cytoplasmic" evidence="1">
    <location>
        <begin position="1"/>
        <end position="12"/>
    </location>
</feature>
<feature type="transmembrane region" description="Helical; Signal-anchor for type II membrane protein" evidence="1">
    <location>
        <begin position="13"/>
        <end position="35"/>
    </location>
</feature>
<feature type="topological domain" description="Lumenal" evidence="1">
    <location>
        <begin position="36"/>
        <end position="461"/>
    </location>
</feature>
<feature type="region of interest" description="Disordered" evidence="2">
    <location>
        <begin position="35"/>
        <end position="138"/>
    </location>
</feature>
<feature type="compositionally biased region" description="Polar residues" evidence="2">
    <location>
        <begin position="35"/>
        <end position="52"/>
    </location>
</feature>
<feature type="compositionally biased region" description="Low complexity" evidence="2">
    <location>
        <begin position="61"/>
        <end position="70"/>
    </location>
</feature>
<feature type="compositionally biased region" description="Low complexity" evidence="2">
    <location>
        <begin position="106"/>
        <end position="116"/>
    </location>
</feature>
<feature type="compositionally biased region" description="Basic and acidic residues" evidence="2">
    <location>
        <begin position="117"/>
        <end position="126"/>
    </location>
</feature>
<feature type="active site" description="Nucleophile" evidence="1">
    <location>
        <position position="349"/>
    </location>
</feature>
<reference key="1">
    <citation type="journal article" date="2005" name="J. Biol. Chem.">
        <title>Mnt1p and Mnt2p of Candida albicans are partially redundant alpha-1,2-mannosyltransferases that participate in O-linked mannosylation and are required for adhesion and virulence.</title>
        <authorList>
            <person name="Munro C.A."/>
            <person name="Bates S."/>
            <person name="Buurman E.T."/>
            <person name="Hughes H.B."/>
            <person name="MacCallum D.M."/>
            <person name="Bertram G."/>
            <person name="Atrih A."/>
            <person name="Ferguson M.A.J."/>
            <person name="Bain J.M."/>
            <person name="Brand A."/>
            <person name="Hamilton S."/>
            <person name="Westwater C."/>
            <person name="Thomson L.M."/>
            <person name="Brown A.J.P."/>
            <person name="Odds F.C."/>
            <person name="Gow N.A.R."/>
        </authorList>
    </citation>
    <scope>NUCLEOTIDE SEQUENCE [GENOMIC DNA]</scope>
    <scope>FUNCTION</scope>
    <source>
        <strain>SC5314 / CAI4 / ATCC MYA-682</strain>
    </source>
</reference>
<reference key="2">
    <citation type="journal article" date="2004" name="Proc. Natl. Acad. Sci. U.S.A.">
        <title>The diploid genome sequence of Candida albicans.</title>
        <authorList>
            <person name="Jones T."/>
            <person name="Federspiel N.A."/>
            <person name="Chibana H."/>
            <person name="Dungan J."/>
            <person name="Kalman S."/>
            <person name="Magee B.B."/>
            <person name="Newport G."/>
            <person name="Thorstenson Y.R."/>
            <person name="Agabian N."/>
            <person name="Magee P.T."/>
            <person name="Davis R.W."/>
            <person name="Scherer S."/>
        </authorList>
    </citation>
    <scope>NUCLEOTIDE SEQUENCE [LARGE SCALE GENOMIC DNA]</scope>
    <source>
        <strain>SC5314 / ATCC MYA-2876</strain>
    </source>
</reference>
<reference key="3">
    <citation type="journal article" date="2007" name="Genome Biol.">
        <title>Assembly of the Candida albicans genome into sixteen supercontigs aligned on the eight chromosomes.</title>
        <authorList>
            <person name="van het Hoog M."/>
            <person name="Rast T.J."/>
            <person name="Martchenko M."/>
            <person name="Grindle S."/>
            <person name="Dignard D."/>
            <person name="Hogues H."/>
            <person name="Cuomo C."/>
            <person name="Berriman M."/>
            <person name="Scherer S."/>
            <person name="Magee B.B."/>
            <person name="Whiteway M."/>
            <person name="Chibana H."/>
            <person name="Nantel A."/>
            <person name="Magee P.T."/>
        </authorList>
    </citation>
    <scope>GENOME REANNOTATION</scope>
    <source>
        <strain>SC5314 / ATCC MYA-2876</strain>
    </source>
</reference>
<reference key="4">
    <citation type="journal article" date="2013" name="Genome Biol.">
        <title>Assembly of a phased diploid Candida albicans genome facilitates allele-specific measurements and provides a simple model for repeat and indel structure.</title>
        <authorList>
            <person name="Muzzey D."/>
            <person name="Schwartz K."/>
            <person name="Weissman J.S."/>
            <person name="Sherlock G."/>
        </authorList>
    </citation>
    <scope>NUCLEOTIDE SEQUENCE [LARGE SCALE GENOMIC DNA]</scope>
    <scope>GENOME REANNOTATION</scope>
    <source>
        <strain>SC5314 / ATCC MYA-2876</strain>
    </source>
</reference>
<protein>
    <recommendedName>
        <fullName>Glycolipid 2-alpha-mannosyltransferase 2</fullName>
        <ecNumber>2.4.1.-</ecNumber>
    </recommendedName>
    <alternativeName>
        <fullName>Alpha-1,2-mannosyltransferase 2</fullName>
    </alternativeName>
</protein>
<accession>P46592</accession>
<accession>A0A1D8PJA0</accession>
<accession>Q5AJC8</accession>
<name>MNT2_CANAL</name>
<organism>
    <name type="scientific">Candida albicans (strain SC5314 / ATCC MYA-2876)</name>
    <name type="common">Yeast</name>
    <dbReference type="NCBI Taxonomy" id="237561"/>
    <lineage>
        <taxon>Eukaryota</taxon>
        <taxon>Fungi</taxon>
        <taxon>Dikarya</taxon>
        <taxon>Ascomycota</taxon>
        <taxon>Saccharomycotina</taxon>
        <taxon>Pichiomycetes</taxon>
        <taxon>Debaryomycetaceae</taxon>
        <taxon>Candida/Lodderomyces clade</taxon>
        <taxon>Candida</taxon>
    </lineage>
</organism>
<sequence length="461" mass="54562">MKPSIFYSSRQPYLKYLAIILTTITIYVLTHSSYSADPNINDVTTKPISETVPQPPPQSPSSPEQQQQQPANQDQIVKVPEELKNKPQDLVVDNNKDQKPAVSGVPKSSSSSPQQQEKQDTKKESENSSSSKDPVKPEKVKATFVTLARNSELYDLIKSIRNVEDRFNRKFNYDWVFLNDDDFTQEFKDLTTALVSGKTKYGKIPKEHWSYPDWIDLKRAEETRKNMKLQKIIYGDSESYRHMCRFESGFFWRHPLLDDYDWYWRVEPSIDIHCDLNYDLFKYMEDNNKVYGFTISIHEFRATIPTLWDTTKKFIKENPQYLAENNFMDFISDDKGETYNLCHFWSNFEIANLNFWRGEAYRKYFDYLDQTGGFFYERWGDAPIHSIAAALFLPKDKIHYFDDVGYKHSVYTQCPLNPQFRYEHKCHCNPDNDFTFRGYSCGKKYFEKMGLQKPKEWEKYQ</sequence>
<keyword id="KW-0328">Glycosyltransferase</keyword>
<keyword id="KW-0333">Golgi apparatus</keyword>
<keyword id="KW-0472">Membrane</keyword>
<keyword id="KW-1185">Reference proteome</keyword>
<keyword id="KW-0735">Signal-anchor</keyword>
<keyword id="KW-0808">Transferase</keyword>
<keyword id="KW-0812">Transmembrane</keyword>
<keyword id="KW-1133">Transmembrane helix</keyword>
<gene>
    <name type="primary">MNT2</name>
    <name type="ordered locus">CAALFM_C301830CA</name>
    <name type="ORF">CaO19.1663</name>
    <name type="ORF">CaO19.9232</name>
</gene>